<organism>
    <name type="scientific">Pseudomonas savastanoi pv. phaseolicola (strain 1448A / Race 6)</name>
    <name type="common">Pseudomonas syringae pv. phaseolicola (strain 1448A / Race 6)</name>
    <dbReference type="NCBI Taxonomy" id="264730"/>
    <lineage>
        <taxon>Bacteria</taxon>
        <taxon>Pseudomonadati</taxon>
        <taxon>Pseudomonadota</taxon>
        <taxon>Gammaproteobacteria</taxon>
        <taxon>Pseudomonadales</taxon>
        <taxon>Pseudomonadaceae</taxon>
        <taxon>Pseudomonas</taxon>
    </lineage>
</organism>
<comment type="function">
    <text evidence="1">Catalyzes the transfer of the enolpyruvyl moiety of phosphoenolpyruvate (PEP) to the 5-hydroxyl of shikimate-3-phosphate (S3P) to produce enolpyruvyl shikimate-3-phosphate and inorganic phosphate.</text>
</comment>
<comment type="catalytic activity">
    <reaction evidence="1">
        <text>3-phosphoshikimate + phosphoenolpyruvate = 5-O-(1-carboxyvinyl)-3-phosphoshikimate + phosphate</text>
        <dbReference type="Rhea" id="RHEA:21256"/>
        <dbReference type="ChEBI" id="CHEBI:43474"/>
        <dbReference type="ChEBI" id="CHEBI:57701"/>
        <dbReference type="ChEBI" id="CHEBI:58702"/>
        <dbReference type="ChEBI" id="CHEBI:145989"/>
        <dbReference type="EC" id="2.5.1.19"/>
    </reaction>
    <physiologicalReaction direction="left-to-right" evidence="1">
        <dbReference type="Rhea" id="RHEA:21257"/>
    </physiologicalReaction>
</comment>
<comment type="pathway">
    <text evidence="1">Metabolic intermediate biosynthesis; chorismate biosynthesis; chorismate from D-erythrose 4-phosphate and phosphoenolpyruvate: step 6/7.</text>
</comment>
<comment type="subunit">
    <text evidence="1">Monomer.</text>
</comment>
<comment type="subcellular location">
    <subcellularLocation>
        <location evidence="1">Cytoplasm</location>
    </subcellularLocation>
</comment>
<comment type="similarity">
    <text evidence="1">Belongs to the EPSP synthase family.</text>
</comment>
<proteinExistence type="inferred from homology"/>
<keyword id="KW-0028">Amino-acid biosynthesis</keyword>
<keyword id="KW-0057">Aromatic amino acid biosynthesis</keyword>
<keyword id="KW-0963">Cytoplasm</keyword>
<keyword id="KW-0808">Transferase</keyword>
<sequence length="418" mass="43677">MRPQATLTVLPVERPLVGRVSPPGSKSITNRALLLAGLAKGTSRLTGALKSDDTRVMSEALRLMGVQVDEPDDSTFVVTSSGHWQAPQQALFLGNAGTATRFLTAALANFEGDFVVDGDEYMRKRPIGPLVDALQRMGVEVSAPSGCPPVAIKGKGGLEAGRIEIDGNLSSQYVSALLMAGACGKGPVEVALTGSEIGARGYVDLTLAAMQAFGAEVQAIGETAWKVSATGYRATDFHIEPDASAATYLWAAQALTEGDIDLGVASDAFTQPDALASQIIASFPNMPAVIDGSQMQDAIPTLAVLAAFNRQPVRFVGIANLRVKECDRISALSHGLCAIAPGLAVEEGDDLLVHANPALAGTTVDALIDTHSDHRIAMCFALAGLKIAGIRILDPDCVGKTYPGYWDALASLGVRVQR</sequence>
<protein>
    <recommendedName>
        <fullName evidence="1">3-phosphoshikimate 1-carboxyvinyltransferase</fullName>
        <ecNumber evidence="1">2.5.1.19</ecNumber>
    </recommendedName>
    <alternativeName>
        <fullName evidence="1">5-enolpyruvylshikimate-3-phosphate synthase</fullName>
        <shortName evidence="1">EPSP synthase</shortName>
        <shortName evidence="1">EPSPS</shortName>
    </alternativeName>
</protein>
<accession>Q48N21</accession>
<dbReference type="EC" id="2.5.1.19" evidence="1"/>
<dbReference type="EMBL" id="CP000058">
    <property type="protein sequence ID" value="AAZ35419.1"/>
    <property type="molecule type" value="Genomic_DNA"/>
</dbReference>
<dbReference type="RefSeq" id="WP_005746506.1">
    <property type="nucleotide sequence ID" value="NC_005773.3"/>
</dbReference>
<dbReference type="SMR" id="Q48N21"/>
<dbReference type="GeneID" id="61868314"/>
<dbReference type="KEGG" id="psp:PSPPH_0925"/>
<dbReference type="eggNOG" id="COG0128">
    <property type="taxonomic scope" value="Bacteria"/>
</dbReference>
<dbReference type="HOGENOM" id="CLU_024321_0_0_6"/>
<dbReference type="UniPathway" id="UPA00053">
    <property type="reaction ID" value="UER00089"/>
</dbReference>
<dbReference type="Proteomes" id="UP000000551">
    <property type="component" value="Chromosome"/>
</dbReference>
<dbReference type="GO" id="GO:0005737">
    <property type="term" value="C:cytoplasm"/>
    <property type="evidence" value="ECO:0007669"/>
    <property type="project" value="UniProtKB-SubCell"/>
</dbReference>
<dbReference type="GO" id="GO:0003866">
    <property type="term" value="F:3-phosphoshikimate 1-carboxyvinyltransferase activity"/>
    <property type="evidence" value="ECO:0007669"/>
    <property type="project" value="UniProtKB-UniRule"/>
</dbReference>
<dbReference type="GO" id="GO:0008652">
    <property type="term" value="P:amino acid biosynthetic process"/>
    <property type="evidence" value="ECO:0007669"/>
    <property type="project" value="UniProtKB-KW"/>
</dbReference>
<dbReference type="GO" id="GO:0009073">
    <property type="term" value="P:aromatic amino acid family biosynthetic process"/>
    <property type="evidence" value="ECO:0007669"/>
    <property type="project" value="UniProtKB-KW"/>
</dbReference>
<dbReference type="GO" id="GO:0009423">
    <property type="term" value="P:chorismate biosynthetic process"/>
    <property type="evidence" value="ECO:0007669"/>
    <property type="project" value="UniProtKB-UniRule"/>
</dbReference>
<dbReference type="CDD" id="cd01556">
    <property type="entry name" value="EPSP_synthase"/>
    <property type="match status" value="1"/>
</dbReference>
<dbReference type="Gene3D" id="3.65.10.10">
    <property type="entry name" value="Enolpyruvate transferase domain"/>
    <property type="match status" value="2"/>
</dbReference>
<dbReference type="HAMAP" id="MF_00210">
    <property type="entry name" value="EPSP_synth"/>
    <property type="match status" value="1"/>
</dbReference>
<dbReference type="InterPro" id="IPR001986">
    <property type="entry name" value="Enolpyruvate_Tfrase_dom"/>
</dbReference>
<dbReference type="InterPro" id="IPR036968">
    <property type="entry name" value="Enolpyruvate_Tfrase_sf"/>
</dbReference>
<dbReference type="InterPro" id="IPR006264">
    <property type="entry name" value="EPSP_synthase"/>
</dbReference>
<dbReference type="InterPro" id="IPR023193">
    <property type="entry name" value="EPSP_synthase_CS"/>
</dbReference>
<dbReference type="InterPro" id="IPR013792">
    <property type="entry name" value="RNA3'P_cycl/enolpyr_Trfase_a/b"/>
</dbReference>
<dbReference type="NCBIfam" id="TIGR01356">
    <property type="entry name" value="aroA"/>
    <property type="match status" value="1"/>
</dbReference>
<dbReference type="PANTHER" id="PTHR21090">
    <property type="entry name" value="AROM/DEHYDROQUINATE SYNTHASE"/>
    <property type="match status" value="1"/>
</dbReference>
<dbReference type="PANTHER" id="PTHR21090:SF5">
    <property type="entry name" value="PENTAFUNCTIONAL AROM POLYPEPTIDE"/>
    <property type="match status" value="1"/>
</dbReference>
<dbReference type="Pfam" id="PF00275">
    <property type="entry name" value="EPSP_synthase"/>
    <property type="match status" value="1"/>
</dbReference>
<dbReference type="PIRSF" id="PIRSF000505">
    <property type="entry name" value="EPSPS"/>
    <property type="match status" value="1"/>
</dbReference>
<dbReference type="SUPFAM" id="SSF55205">
    <property type="entry name" value="EPT/RTPC-like"/>
    <property type="match status" value="1"/>
</dbReference>
<dbReference type="PROSITE" id="PS00104">
    <property type="entry name" value="EPSP_SYNTHASE_1"/>
    <property type="match status" value="1"/>
</dbReference>
<reference key="1">
    <citation type="journal article" date="2005" name="J. Bacteriol.">
        <title>Whole-genome sequence analysis of Pseudomonas syringae pv. phaseolicola 1448A reveals divergence among pathovars in genes involved in virulence and transposition.</title>
        <authorList>
            <person name="Joardar V."/>
            <person name="Lindeberg M."/>
            <person name="Jackson R.W."/>
            <person name="Selengut J."/>
            <person name="Dodson R."/>
            <person name="Brinkac L.M."/>
            <person name="Daugherty S.C."/>
            <person name="DeBoy R.T."/>
            <person name="Durkin A.S."/>
            <person name="Gwinn Giglio M."/>
            <person name="Madupu R."/>
            <person name="Nelson W.C."/>
            <person name="Rosovitz M.J."/>
            <person name="Sullivan S.A."/>
            <person name="Crabtree J."/>
            <person name="Creasy T."/>
            <person name="Davidsen T.M."/>
            <person name="Haft D.H."/>
            <person name="Zafar N."/>
            <person name="Zhou L."/>
            <person name="Halpin R."/>
            <person name="Holley T."/>
            <person name="Khouri H.M."/>
            <person name="Feldblyum T.V."/>
            <person name="White O."/>
            <person name="Fraser C.M."/>
            <person name="Chatterjee A.K."/>
            <person name="Cartinhour S."/>
            <person name="Schneider D."/>
            <person name="Mansfield J.W."/>
            <person name="Collmer A."/>
            <person name="Buell R."/>
        </authorList>
    </citation>
    <scope>NUCLEOTIDE SEQUENCE [LARGE SCALE GENOMIC DNA]</scope>
    <source>
        <strain>1448A / Race 6</strain>
    </source>
</reference>
<evidence type="ECO:0000255" key="1">
    <source>
        <dbReference type="HAMAP-Rule" id="MF_00210"/>
    </source>
</evidence>
<name>AROA_PSE14</name>
<feature type="chain" id="PRO_1000124696" description="3-phosphoshikimate 1-carboxyvinyltransferase">
    <location>
        <begin position="1"/>
        <end position="418"/>
    </location>
</feature>
<feature type="active site" description="Proton acceptor" evidence="1">
    <location>
        <position position="297"/>
    </location>
</feature>
<feature type="binding site" evidence="1">
    <location>
        <position position="26"/>
    </location>
    <ligand>
        <name>3-phosphoshikimate</name>
        <dbReference type="ChEBI" id="CHEBI:145989"/>
    </ligand>
</feature>
<feature type="binding site" evidence="1">
    <location>
        <position position="26"/>
    </location>
    <ligand>
        <name>phosphoenolpyruvate</name>
        <dbReference type="ChEBI" id="CHEBI:58702"/>
    </ligand>
</feature>
<feature type="binding site" evidence="1">
    <location>
        <position position="27"/>
    </location>
    <ligand>
        <name>3-phosphoshikimate</name>
        <dbReference type="ChEBI" id="CHEBI:145989"/>
    </ligand>
</feature>
<feature type="binding site" evidence="1">
    <location>
        <position position="31"/>
    </location>
    <ligand>
        <name>3-phosphoshikimate</name>
        <dbReference type="ChEBI" id="CHEBI:145989"/>
    </ligand>
</feature>
<feature type="binding site" evidence="1">
    <location>
        <position position="97"/>
    </location>
    <ligand>
        <name>phosphoenolpyruvate</name>
        <dbReference type="ChEBI" id="CHEBI:58702"/>
    </ligand>
</feature>
<feature type="binding site" evidence="1">
    <location>
        <position position="125"/>
    </location>
    <ligand>
        <name>phosphoenolpyruvate</name>
        <dbReference type="ChEBI" id="CHEBI:58702"/>
    </ligand>
</feature>
<feature type="binding site" evidence="1">
    <location>
        <position position="170"/>
    </location>
    <ligand>
        <name>3-phosphoshikimate</name>
        <dbReference type="ChEBI" id="CHEBI:145989"/>
    </ligand>
</feature>
<feature type="binding site" evidence="1">
    <location>
        <position position="171"/>
    </location>
    <ligand>
        <name>3-phosphoshikimate</name>
        <dbReference type="ChEBI" id="CHEBI:145989"/>
    </ligand>
</feature>
<feature type="binding site" evidence="1">
    <location>
        <position position="172"/>
    </location>
    <ligand>
        <name>3-phosphoshikimate</name>
        <dbReference type="ChEBI" id="CHEBI:145989"/>
    </ligand>
</feature>
<feature type="binding site" evidence="1">
    <location>
        <position position="172"/>
    </location>
    <ligand>
        <name>phosphoenolpyruvate</name>
        <dbReference type="ChEBI" id="CHEBI:58702"/>
    </ligand>
</feature>
<feature type="binding site" evidence="1">
    <location>
        <position position="297"/>
    </location>
    <ligand>
        <name>3-phosphoshikimate</name>
        <dbReference type="ChEBI" id="CHEBI:145989"/>
    </ligand>
</feature>
<feature type="binding site" evidence="1">
    <location>
        <position position="320"/>
    </location>
    <ligand>
        <name>3-phosphoshikimate</name>
        <dbReference type="ChEBI" id="CHEBI:145989"/>
    </ligand>
</feature>
<feature type="binding site" evidence="1">
    <location>
        <position position="324"/>
    </location>
    <ligand>
        <name>3-phosphoshikimate</name>
        <dbReference type="ChEBI" id="CHEBI:145989"/>
    </ligand>
</feature>
<feature type="binding site" evidence="1">
    <location>
        <position position="328"/>
    </location>
    <ligand>
        <name>phosphoenolpyruvate</name>
        <dbReference type="ChEBI" id="CHEBI:58702"/>
    </ligand>
</feature>
<feature type="binding site" evidence="1">
    <location>
        <position position="375"/>
    </location>
    <ligand>
        <name>phosphoenolpyruvate</name>
        <dbReference type="ChEBI" id="CHEBI:58702"/>
    </ligand>
</feature>
<feature type="binding site" evidence="1">
    <location>
        <position position="400"/>
    </location>
    <ligand>
        <name>phosphoenolpyruvate</name>
        <dbReference type="ChEBI" id="CHEBI:58702"/>
    </ligand>
</feature>
<gene>
    <name evidence="1" type="primary">aroA</name>
    <name type="ordered locus">PSPPH_0925</name>
</gene>